<protein>
    <recommendedName>
        <fullName evidence="1">Global transcriptional regulator CodY</fullName>
    </recommendedName>
</protein>
<organism>
    <name type="scientific">Staphylococcus aureus (strain COL)</name>
    <dbReference type="NCBI Taxonomy" id="93062"/>
    <lineage>
        <taxon>Bacteria</taxon>
        <taxon>Bacillati</taxon>
        <taxon>Bacillota</taxon>
        <taxon>Bacilli</taxon>
        <taxon>Bacillales</taxon>
        <taxon>Staphylococcaceae</taxon>
        <taxon>Staphylococcus</taxon>
    </lineage>
</organism>
<evidence type="ECO:0000255" key="1">
    <source>
        <dbReference type="HAMAP-Rule" id="MF_00621"/>
    </source>
</evidence>
<comment type="function">
    <text evidence="1">DNA-binding global transcriptional regulator which is involved in the adaptive response to starvation and acts by directly or indirectly controlling the expression of numerous genes in response to nutrient availability. During rapid exponential growth, CodY is highly active and represses genes whose products allow adaptation to nutrient depletion.</text>
</comment>
<comment type="subcellular location">
    <subcellularLocation>
        <location evidence="1">Cytoplasm</location>
    </subcellularLocation>
</comment>
<comment type="similarity">
    <text evidence="1">Belongs to the CodY family.</text>
</comment>
<dbReference type="EMBL" id="CP000046">
    <property type="protein sequence ID" value="AAW38104.1"/>
    <property type="molecule type" value="Genomic_DNA"/>
</dbReference>
<dbReference type="RefSeq" id="WP_000055337.1">
    <property type="nucleotide sequence ID" value="NZ_JBGOFO010000002.1"/>
</dbReference>
<dbReference type="SMR" id="Q5HGH7"/>
<dbReference type="KEGG" id="sac:SACOL1272"/>
<dbReference type="HOGENOM" id="CLU_089581_0_0_9"/>
<dbReference type="Proteomes" id="UP000000530">
    <property type="component" value="Chromosome"/>
</dbReference>
<dbReference type="GO" id="GO:0005737">
    <property type="term" value="C:cytoplasm"/>
    <property type="evidence" value="ECO:0007669"/>
    <property type="project" value="UniProtKB-SubCell"/>
</dbReference>
<dbReference type="GO" id="GO:0003677">
    <property type="term" value="F:DNA binding"/>
    <property type="evidence" value="ECO:0007669"/>
    <property type="project" value="UniProtKB-UniRule"/>
</dbReference>
<dbReference type="GO" id="GO:0003700">
    <property type="term" value="F:DNA-binding transcription factor activity"/>
    <property type="evidence" value="ECO:0007669"/>
    <property type="project" value="InterPro"/>
</dbReference>
<dbReference type="GO" id="GO:0005525">
    <property type="term" value="F:GTP binding"/>
    <property type="evidence" value="ECO:0007669"/>
    <property type="project" value="InterPro"/>
</dbReference>
<dbReference type="GO" id="GO:0045892">
    <property type="term" value="P:negative regulation of DNA-templated transcription"/>
    <property type="evidence" value="ECO:0007669"/>
    <property type="project" value="UniProtKB-UniRule"/>
</dbReference>
<dbReference type="FunFam" id="1.10.10.10:FF:000034">
    <property type="entry name" value="GTP-sensing transcriptional pleiotropic repressor CodY"/>
    <property type="match status" value="1"/>
</dbReference>
<dbReference type="FunFam" id="3.30.450.40:FF:000003">
    <property type="entry name" value="GTP-sensing transcriptional pleiotropic repressor CodY"/>
    <property type="match status" value="1"/>
</dbReference>
<dbReference type="Gene3D" id="3.30.450.40">
    <property type="match status" value="1"/>
</dbReference>
<dbReference type="Gene3D" id="1.10.10.10">
    <property type="entry name" value="Winged helix-like DNA-binding domain superfamily/Winged helix DNA-binding domain"/>
    <property type="match status" value="1"/>
</dbReference>
<dbReference type="HAMAP" id="MF_00621">
    <property type="entry name" value="HTH_type_CodY"/>
    <property type="match status" value="1"/>
</dbReference>
<dbReference type="InterPro" id="IPR014154">
    <property type="entry name" value="CodY"/>
</dbReference>
<dbReference type="InterPro" id="IPR029016">
    <property type="entry name" value="GAF-like_dom_sf"/>
</dbReference>
<dbReference type="InterPro" id="IPR013198">
    <property type="entry name" value="GTP_trans_reg_CodY_C"/>
</dbReference>
<dbReference type="InterPro" id="IPR010312">
    <property type="entry name" value="Transc_reg_CodY_N"/>
</dbReference>
<dbReference type="InterPro" id="IPR036388">
    <property type="entry name" value="WH-like_DNA-bd_sf"/>
</dbReference>
<dbReference type="InterPro" id="IPR036390">
    <property type="entry name" value="WH_DNA-bd_sf"/>
</dbReference>
<dbReference type="NCBIfam" id="TIGR02787">
    <property type="entry name" value="codY_Gpos"/>
    <property type="match status" value="1"/>
</dbReference>
<dbReference type="NCBIfam" id="NF003170">
    <property type="entry name" value="PRK04158.1"/>
    <property type="match status" value="1"/>
</dbReference>
<dbReference type="PANTHER" id="PTHR40062:SF1">
    <property type="entry name" value="GLOBAL TRANSCRIPTIONAL REGULATOR CODY"/>
    <property type="match status" value="1"/>
</dbReference>
<dbReference type="PANTHER" id="PTHR40062">
    <property type="entry name" value="GTP-SENSING TRANSCRIPTIONAL PLEIOTROPIC REPRESSOR CODY"/>
    <property type="match status" value="1"/>
</dbReference>
<dbReference type="Pfam" id="PF06018">
    <property type="entry name" value="CodY"/>
    <property type="match status" value="1"/>
</dbReference>
<dbReference type="Pfam" id="PF08222">
    <property type="entry name" value="HTH_CodY"/>
    <property type="match status" value="1"/>
</dbReference>
<dbReference type="PIRSF" id="PIRSF011572">
    <property type="entry name" value="GTP_sensing_CodY"/>
    <property type="match status" value="1"/>
</dbReference>
<dbReference type="SUPFAM" id="SSF46785">
    <property type="entry name" value="Winged helix' DNA-binding domain"/>
    <property type="match status" value="1"/>
</dbReference>
<sequence>MSLLSKTRELNTLLQKHKGIAVDFKDVAQTISSVTVTNVFIVSRRGKILGSSLNELLKSQRIIQMLEERHIPSEYTERLMEVKQTESNIDIDNVLTVFPPENRELFIDSRTTIFPILGGGERLGTLVLGRVHDDFNENDLVLGEYAATVIGMEILREKHSEVEKEARDKAAITMAINSLSYSEKEAIEHIFEELGGTEGLLIASKVADRVGITRSVIVNALRKLESAGVIESRSLGMKGTFIKVKKEKFLDELEKSK</sequence>
<name>CODY_STAAC</name>
<keyword id="KW-0963">Cytoplasm</keyword>
<keyword id="KW-0238">DNA-binding</keyword>
<keyword id="KW-0678">Repressor</keyword>
<keyword id="KW-0804">Transcription</keyword>
<keyword id="KW-0805">Transcription regulation</keyword>
<proteinExistence type="inferred from homology"/>
<gene>
    <name evidence="1" type="primary">codY</name>
    <name type="ordered locus">SACOL1272</name>
</gene>
<feature type="chain" id="PRO_0000213231" description="Global transcriptional regulator CodY">
    <location>
        <begin position="1"/>
        <end position="257"/>
    </location>
</feature>
<feature type="DNA-binding region" description="H-T-H motif" evidence="1">
    <location>
        <begin position="203"/>
        <end position="222"/>
    </location>
</feature>
<feature type="region of interest" description="GAF domain" evidence="1">
    <location>
        <begin position="1"/>
        <end position="155"/>
    </location>
</feature>
<reference key="1">
    <citation type="journal article" date="2005" name="J. Bacteriol.">
        <title>Insights on evolution of virulence and resistance from the complete genome analysis of an early methicillin-resistant Staphylococcus aureus strain and a biofilm-producing methicillin-resistant Staphylococcus epidermidis strain.</title>
        <authorList>
            <person name="Gill S.R."/>
            <person name="Fouts D.E."/>
            <person name="Archer G.L."/>
            <person name="Mongodin E.F."/>
            <person name="DeBoy R.T."/>
            <person name="Ravel J."/>
            <person name="Paulsen I.T."/>
            <person name="Kolonay J.F."/>
            <person name="Brinkac L.M."/>
            <person name="Beanan M.J."/>
            <person name="Dodson R.J."/>
            <person name="Daugherty S.C."/>
            <person name="Madupu R."/>
            <person name="Angiuoli S.V."/>
            <person name="Durkin A.S."/>
            <person name="Haft D.H."/>
            <person name="Vamathevan J.J."/>
            <person name="Khouri H."/>
            <person name="Utterback T.R."/>
            <person name="Lee C."/>
            <person name="Dimitrov G."/>
            <person name="Jiang L."/>
            <person name="Qin H."/>
            <person name="Weidman J."/>
            <person name="Tran K."/>
            <person name="Kang K.H."/>
            <person name="Hance I.R."/>
            <person name="Nelson K.E."/>
            <person name="Fraser C.M."/>
        </authorList>
    </citation>
    <scope>NUCLEOTIDE SEQUENCE [LARGE SCALE GENOMIC DNA]</scope>
    <source>
        <strain>COL</strain>
    </source>
</reference>
<accession>Q5HGH7</accession>